<keyword id="KW-1003">Cell membrane</keyword>
<keyword id="KW-0966">Cell projection</keyword>
<keyword id="KW-0963">Cytoplasm</keyword>
<keyword id="KW-0297">G-protein coupled receptor</keyword>
<keyword id="KW-0325">Glycoprotein</keyword>
<keyword id="KW-0472">Membrane</keyword>
<keyword id="KW-0539">Nucleus</keyword>
<keyword id="KW-0675">Receptor</keyword>
<keyword id="KW-1185">Reference proteome</keyword>
<keyword id="KW-0807">Transducer</keyword>
<keyword id="KW-0812">Transmembrane</keyword>
<keyword id="KW-1133">Transmembrane helix</keyword>
<gene>
    <name type="primary">Gpr88</name>
    <name type="synonym">Strg</name>
</gene>
<evidence type="ECO:0000250" key="1">
    <source>
        <dbReference type="UniProtKB" id="Q9ESP4"/>
    </source>
</evidence>
<evidence type="ECO:0000250" key="2">
    <source>
        <dbReference type="UniProtKB" id="Q9GZN0"/>
    </source>
</evidence>
<evidence type="ECO:0000255" key="3"/>
<evidence type="ECO:0000255" key="4">
    <source>
        <dbReference type="PROSITE-ProRule" id="PRU00521"/>
    </source>
</evidence>
<evidence type="ECO:0000269" key="5">
    <source>
    </source>
</evidence>
<evidence type="ECO:0000269" key="6">
    <source>
    </source>
</evidence>
<evidence type="ECO:0000305" key="7"/>
<accession>Q9EPB7</accession>
<protein>
    <recommendedName>
        <fullName evidence="7">G protein-coupled receptor 88</fullName>
    </recommendedName>
    <alternativeName>
        <fullName>Striatum-specific G-protein coupled receptor</fullName>
    </alternativeName>
</protein>
<comment type="function">
    <text evidence="1 2 6">Orphan G protein-coupled receptor implicated in a large repertoire of behavioral responses that engage motor activities, spatial learning, and emotional processing (By similarity). May play a role in the regulation of cognitive and motor function (PubMed:26188600). Couples with the heterotrimeric G protein complex of the G(i) subfamily, consisting of GNAI1, GNB1 and GNG2, thereby acting through a G(i)-mediated pathway (By similarity). Plays a role in the attenuation of D1 dopamine receptor (D1R)-mediated cAMP response in ciliated cells (By similarity). In on-ciliated cells, involved in the inhibition of the beta-2 adrenergic receptor (B2AR) response (By similarity).</text>
</comment>
<comment type="subcellular location">
    <subcellularLocation>
        <location evidence="1">Cell membrane</location>
        <topology evidence="3">Multi-pass membrane protein</topology>
    </subcellularLocation>
    <subcellularLocation>
        <location evidence="2">Cell projection</location>
        <location evidence="2">Cilium membrane</location>
        <topology evidence="3">Multi-pass membrane protein</topology>
    </subcellularLocation>
    <subcellularLocation>
        <location evidence="1">Cytoplasm</location>
    </subcellularLocation>
    <subcellularLocation>
        <location evidence="1">Nucleus</location>
    </subcellularLocation>
    <text evidence="1 2">Localized to cilia in ciliated cells; whereas in non-ciliated cells, distributed throughout the cell membrane (By similarity). During cortical lamination, subcellular location shifts, on the day of birth, from expression at the plasma membrane and in the cytoplasm to the nuclei of neurons. This intranuclear localization remains throughout adulthood.</text>
</comment>
<comment type="tissue specificity">
    <text evidence="5">Expressed predominantly in the striatum.</text>
</comment>
<comment type="disruption phenotype">
    <text evidence="6">Mice have increased locomotion, increased motor stereotypical behavior, and impaired motor skill learning. Mutant mice also show facilitated hippocampal-mediated behaviors and decreased anxiety. Chronic blockade of delta opioid receptors and mu opioid, but not other Gi/o coupled receptors, using delta opioid receptor antagonist partially improved motor coordination and normalized spatial navigation and anxiety of mutant mice.</text>
</comment>
<comment type="similarity">
    <text evidence="4">Belongs to the G-protein coupled receptor 1 family.</text>
</comment>
<feature type="chain" id="PRO_0000069598" description="G protein-coupled receptor 88">
    <location>
        <begin position="1"/>
        <end position="384"/>
    </location>
</feature>
<feature type="topological domain" description="Extracellular" evidence="3">
    <location>
        <begin position="1"/>
        <end position="35"/>
    </location>
</feature>
<feature type="transmembrane region" description="Helical; Name=1" evidence="3">
    <location>
        <begin position="36"/>
        <end position="56"/>
    </location>
</feature>
<feature type="topological domain" description="Cytoplasmic" evidence="3">
    <location>
        <begin position="57"/>
        <end position="73"/>
    </location>
</feature>
<feature type="transmembrane region" description="Helical; Name=2" evidence="3">
    <location>
        <begin position="74"/>
        <end position="94"/>
    </location>
</feature>
<feature type="topological domain" description="Extracellular" evidence="3">
    <location>
        <begin position="95"/>
        <end position="116"/>
    </location>
</feature>
<feature type="transmembrane region" description="Helical; Name=3" evidence="3">
    <location>
        <begin position="117"/>
        <end position="136"/>
    </location>
</feature>
<feature type="topological domain" description="Cytoplasmic" evidence="3">
    <location>
        <begin position="137"/>
        <end position="158"/>
    </location>
</feature>
<feature type="transmembrane region" description="Helical; Name=4" evidence="3">
    <location>
        <begin position="159"/>
        <end position="179"/>
    </location>
</feature>
<feature type="topological domain" description="Extracellular" evidence="3">
    <location>
        <begin position="180"/>
        <end position="195"/>
    </location>
</feature>
<feature type="transmembrane region" description="Helical; Name=5" evidence="3">
    <location>
        <begin position="196"/>
        <end position="216"/>
    </location>
</feature>
<feature type="topological domain" description="Cytoplasmic" evidence="3">
    <location>
        <begin position="217"/>
        <end position="285"/>
    </location>
</feature>
<feature type="transmembrane region" description="Helical; Name=6" evidence="3">
    <location>
        <begin position="286"/>
        <end position="306"/>
    </location>
</feature>
<feature type="topological domain" description="Extracellular" evidence="3">
    <location>
        <begin position="307"/>
        <end position="310"/>
    </location>
</feature>
<feature type="transmembrane region" description="Helical; Name=7" evidence="3">
    <location>
        <begin position="311"/>
        <end position="331"/>
    </location>
</feature>
<feature type="topological domain" description="Cytoplasmic" evidence="3">
    <location>
        <begin position="332"/>
        <end position="384"/>
    </location>
</feature>
<feature type="glycosylation site" description="N-linked (GlcNAc...) asparagine" evidence="3">
    <location>
        <position position="3"/>
    </location>
</feature>
<proteinExistence type="evidence at transcript level"/>
<sequence length="384" mass="40240">MTNSSSTSTSTTTGGSLLLLCEEEESWAGRRIPVSLLYSGLAIGGTLANGMVIYLVSSFRKLQTTSNAFIVNGCAADLSVCALWMPQEAVLGLLPSGSAEPPGDWDGGGGSYRLLRGGLLGLGLTVSLLSHCLVALNRYLLITRAPATYQVLYQRRHTVGMLALSWALALGLVLLLPPWAPKPGAEPPQVHYPALLAAGALLAQTALLLHCYLGIVRRVRVSVKRVSVLNFHLLHQLPGCAAAAAAFPAAPHAPGPGGAAHPAQPQPLPAALQPRRAQRRLSGLSVLLLCCVFLLATQPLVWVSLASGFSLPVPWGVQAASWLLCCALSALNPLLYTWRNEEFRRSVRSVLPGVGDAAAAAAAATAVPAMSQAQLGTRAAGQHW</sequence>
<dbReference type="EMBL" id="AB042408">
    <property type="protein sequence ID" value="BAB18245.1"/>
    <property type="molecule type" value="mRNA"/>
</dbReference>
<dbReference type="EMBL" id="AB042409">
    <property type="protein sequence ID" value="BAB18246.1"/>
    <property type="molecule type" value="Genomic_DNA"/>
</dbReference>
<dbReference type="EMBL" id="BC051941">
    <property type="protein sequence ID" value="AAH51941.1"/>
    <property type="molecule type" value="mRNA"/>
</dbReference>
<dbReference type="CCDS" id="CCDS38610.1"/>
<dbReference type="RefSeq" id="NP_001398353.1">
    <property type="nucleotide sequence ID" value="NM_001411424.1"/>
</dbReference>
<dbReference type="RefSeq" id="NP_001398354.1">
    <property type="nucleotide sequence ID" value="NM_001411425.1"/>
</dbReference>
<dbReference type="RefSeq" id="NP_001398355.1">
    <property type="nucleotide sequence ID" value="NM_001411426.1"/>
</dbReference>
<dbReference type="RefSeq" id="NP_071872.1">
    <property type="nucleotide sequence ID" value="NM_022427.3"/>
</dbReference>
<dbReference type="RefSeq" id="XP_006501919.1">
    <property type="nucleotide sequence ID" value="XM_006501856.1"/>
</dbReference>
<dbReference type="RefSeq" id="XP_006501920.1">
    <property type="nucleotide sequence ID" value="XM_006501857.1"/>
</dbReference>
<dbReference type="SMR" id="Q9EPB7"/>
<dbReference type="CORUM" id="Q9EPB7"/>
<dbReference type="FunCoup" id="Q9EPB7">
    <property type="interactions" value="507"/>
</dbReference>
<dbReference type="STRING" id="10090.ENSMUSP00000087959"/>
<dbReference type="BindingDB" id="Q9EPB7"/>
<dbReference type="ChEMBL" id="CHEMBL3879835"/>
<dbReference type="GlyCosmos" id="Q9EPB7">
    <property type="glycosylation" value="1 site, No reported glycans"/>
</dbReference>
<dbReference type="GlyGen" id="Q9EPB7">
    <property type="glycosylation" value="1 site"/>
</dbReference>
<dbReference type="PhosphoSitePlus" id="Q9EPB7"/>
<dbReference type="PaxDb" id="10090-ENSMUSP00000087959"/>
<dbReference type="ProteomicsDB" id="271072"/>
<dbReference type="Antibodypedia" id="19999">
    <property type="antibodies" value="196 antibodies from 25 providers"/>
</dbReference>
<dbReference type="DNASU" id="64378"/>
<dbReference type="Ensembl" id="ENSMUST00000090473.7">
    <property type="protein sequence ID" value="ENSMUSP00000087959.6"/>
    <property type="gene ID" value="ENSMUSG00000068696.7"/>
</dbReference>
<dbReference type="GeneID" id="64378"/>
<dbReference type="KEGG" id="mmu:64378"/>
<dbReference type="UCSC" id="uc008rbz.2">
    <property type="organism name" value="mouse"/>
</dbReference>
<dbReference type="AGR" id="MGI:1927653"/>
<dbReference type="CTD" id="54112"/>
<dbReference type="MGI" id="MGI:1927653">
    <property type="gene designation" value="Gpr88"/>
</dbReference>
<dbReference type="VEuPathDB" id="HostDB:ENSMUSG00000068696"/>
<dbReference type="eggNOG" id="KOG3656">
    <property type="taxonomic scope" value="Eukaryota"/>
</dbReference>
<dbReference type="GeneTree" id="ENSGT00390000009609"/>
<dbReference type="HOGENOM" id="CLU_053532_0_0_1"/>
<dbReference type="InParanoid" id="Q9EPB7"/>
<dbReference type="OMA" id="LLYTWKN"/>
<dbReference type="OrthoDB" id="10039923at2759"/>
<dbReference type="PhylomeDB" id="Q9EPB7"/>
<dbReference type="TreeFam" id="TF336499"/>
<dbReference type="BioGRID-ORCS" id="64378">
    <property type="hits" value="2 hits in 76 CRISPR screens"/>
</dbReference>
<dbReference type="PRO" id="PR:Q9EPB7"/>
<dbReference type="Proteomes" id="UP000000589">
    <property type="component" value="Chromosome 3"/>
</dbReference>
<dbReference type="RNAct" id="Q9EPB7">
    <property type="molecule type" value="protein"/>
</dbReference>
<dbReference type="Bgee" id="ENSMUSG00000068696">
    <property type="expression patterns" value="Expressed in caudate-putamen and 138 other cell types or tissues"/>
</dbReference>
<dbReference type="ExpressionAtlas" id="Q9EPB7">
    <property type="expression patterns" value="baseline and differential"/>
</dbReference>
<dbReference type="GO" id="GO:0060170">
    <property type="term" value="C:ciliary membrane"/>
    <property type="evidence" value="ECO:0000250"/>
    <property type="project" value="UniProtKB"/>
</dbReference>
<dbReference type="GO" id="GO:0005929">
    <property type="term" value="C:cilium"/>
    <property type="evidence" value="ECO:0000266"/>
    <property type="project" value="MGI"/>
</dbReference>
<dbReference type="GO" id="GO:0005737">
    <property type="term" value="C:cytoplasm"/>
    <property type="evidence" value="ECO:0000250"/>
    <property type="project" value="UniProtKB"/>
</dbReference>
<dbReference type="GO" id="GO:0005634">
    <property type="term" value="C:nucleus"/>
    <property type="evidence" value="ECO:0000250"/>
    <property type="project" value="UniProtKB"/>
</dbReference>
<dbReference type="GO" id="GO:0005886">
    <property type="term" value="C:plasma membrane"/>
    <property type="evidence" value="ECO:0000250"/>
    <property type="project" value="UniProtKB"/>
</dbReference>
<dbReference type="GO" id="GO:0004941">
    <property type="term" value="F:beta2-adrenergic receptor activity"/>
    <property type="evidence" value="ECO:0000250"/>
    <property type="project" value="UniProtKB"/>
</dbReference>
<dbReference type="GO" id="GO:0003774">
    <property type="term" value="F:cytoskeletal motor activity"/>
    <property type="evidence" value="ECO:0000315"/>
    <property type="project" value="UniProtKB"/>
</dbReference>
<dbReference type="GO" id="GO:0004930">
    <property type="term" value="F:G protein-coupled receptor activity"/>
    <property type="evidence" value="ECO:0000250"/>
    <property type="project" value="MGI"/>
</dbReference>
<dbReference type="GO" id="GO:0004888">
    <property type="term" value="F:transmembrane signaling receptor activity"/>
    <property type="evidence" value="ECO:0000250"/>
    <property type="project" value="MGI"/>
</dbReference>
<dbReference type="GO" id="GO:0007188">
    <property type="term" value="P:adenylate cyclase-modulating G protein-coupled receptor signaling pathway"/>
    <property type="evidence" value="ECO:0000250"/>
    <property type="project" value="UniProtKB"/>
</dbReference>
<dbReference type="GO" id="GO:0007186">
    <property type="term" value="P:G protein-coupled receptor signaling pathway"/>
    <property type="evidence" value="ECO:0000250"/>
    <property type="project" value="UniProtKB"/>
</dbReference>
<dbReference type="GO" id="GO:0007626">
    <property type="term" value="P:locomotory behavior"/>
    <property type="evidence" value="ECO:0000315"/>
    <property type="project" value="MGI"/>
</dbReference>
<dbReference type="GO" id="GO:0061743">
    <property type="term" value="P:motor learning"/>
    <property type="evidence" value="ECO:0000315"/>
    <property type="project" value="UniProtKB"/>
</dbReference>
<dbReference type="GO" id="GO:0050885">
    <property type="term" value="P:neuromuscular process controlling balance"/>
    <property type="evidence" value="ECO:0000315"/>
    <property type="project" value="MGI"/>
</dbReference>
<dbReference type="GO" id="GO:0019228">
    <property type="term" value="P:neuronal action potential"/>
    <property type="evidence" value="ECO:0000315"/>
    <property type="project" value="MGI"/>
</dbReference>
<dbReference type="Gene3D" id="1.20.1070.10">
    <property type="entry name" value="Rhodopsin 7-helix transmembrane proteins"/>
    <property type="match status" value="1"/>
</dbReference>
<dbReference type="InterPro" id="IPR050125">
    <property type="entry name" value="GPCR_opsins"/>
</dbReference>
<dbReference type="InterPro" id="IPR000276">
    <property type="entry name" value="GPCR_Rhodpsn"/>
</dbReference>
<dbReference type="InterPro" id="IPR017452">
    <property type="entry name" value="GPCR_Rhodpsn_7TM"/>
</dbReference>
<dbReference type="PANTHER" id="PTHR24240">
    <property type="entry name" value="OPSIN"/>
    <property type="match status" value="1"/>
</dbReference>
<dbReference type="Pfam" id="PF00001">
    <property type="entry name" value="7tm_1"/>
    <property type="match status" value="1"/>
</dbReference>
<dbReference type="PRINTS" id="PR00237">
    <property type="entry name" value="GPCRRHODOPSN"/>
</dbReference>
<dbReference type="SUPFAM" id="SSF81321">
    <property type="entry name" value="Family A G protein-coupled receptor-like"/>
    <property type="match status" value="1"/>
</dbReference>
<dbReference type="PROSITE" id="PS50262">
    <property type="entry name" value="G_PROTEIN_RECEP_F1_2"/>
    <property type="match status" value="1"/>
</dbReference>
<organism>
    <name type="scientific">Mus musculus</name>
    <name type="common">Mouse</name>
    <dbReference type="NCBI Taxonomy" id="10090"/>
    <lineage>
        <taxon>Eukaryota</taxon>
        <taxon>Metazoa</taxon>
        <taxon>Chordata</taxon>
        <taxon>Craniata</taxon>
        <taxon>Vertebrata</taxon>
        <taxon>Euteleostomi</taxon>
        <taxon>Mammalia</taxon>
        <taxon>Eutheria</taxon>
        <taxon>Euarchontoglires</taxon>
        <taxon>Glires</taxon>
        <taxon>Rodentia</taxon>
        <taxon>Myomorpha</taxon>
        <taxon>Muroidea</taxon>
        <taxon>Muridae</taxon>
        <taxon>Murinae</taxon>
        <taxon>Mus</taxon>
        <taxon>Mus</taxon>
    </lineage>
</organism>
<name>GPR88_MOUSE</name>
<reference key="1">
    <citation type="journal article" date="2000" name="Genomics">
        <title>A novel G-protein-coupled receptor gene expressed in striatum.</title>
        <authorList>
            <person name="Mizushima K."/>
            <person name="Miyamoto Y."/>
            <person name="Tsukahara F."/>
            <person name="Hirai M."/>
            <person name="Sakaki Y."/>
            <person name="Ito T."/>
        </authorList>
    </citation>
    <scope>NUCLEOTIDE SEQUENCE [GENOMIC DNA / MRNA]</scope>
    <scope>TISSUE SPECIFICITY</scope>
</reference>
<reference key="2">
    <citation type="journal article" date="2004" name="Genome Res.">
        <title>The status, quality, and expansion of the NIH full-length cDNA project: the Mammalian Gene Collection (MGC).</title>
        <authorList>
            <consortium name="The MGC Project Team"/>
        </authorList>
    </citation>
    <scope>NUCLEOTIDE SEQUENCE [LARGE SCALE MRNA]</scope>
    <source>
        <strain>C57BL/6J</strain>
        <tissue>Brain</tissue>
    </source>
</reference>
<reference key="3">
    <citation type="journal article" date="2016" name="Biol. Psychiatry">
        <title>Mice lacking GPR88 show motor deficit, improved spatial learning, and low anxiety reversed by delta opioid antagonist.</title>
        <authorList>
            <person name="Meirsman A.C."/>
            <person name="Le Merrer J."/>
            <person name="Pellissier L.P."/>
            <person name="Diaz J."/>
            <person name="Clesse D."/>
            <person name="Kieffer B.L."/>
            <person name="Becker J.A."/>
        </authorList>
    </citation>
    <scope>FUNCTION</scope>
    <scope>DISRUPTION PHENOTYPE</scope>
</reference>